<comment type="function">
    <text evidence="1">Involved in peptide bond synthesis. Alleviates ribosome stalling that occurs when 3 or more consecutive Pro residues or the sequence PPG is present in a protein, possibly by augmenting the peptidyl transferase activity of the ribosome. Modification of Lys-34 is required for alleviation.</text>
</comment>
<comment type="pathway">
    <text evidence="1">Protein biosynthesis; polypeptide chain elongation.</text>
</comment>
<comment type="subcellular location">
    <subcellularLocation>
        <location evidence="1">Cytoplasm</location>
    </subcellularLocation>
</comment>
<comment type="PTM">
    <text evidence="1">May be beta-lysylated on the epsilon-amino group of Lys-34 by the combined action of EpmA and EpmB, and then hydroxylated on the C5 position of the same residue by EpmC (if this protein is present). Lysylation is critical for the stimulatory effect of EF-P on peptide-bond formation. The lysylation moiety may extend toward the peptidyltransferase center and stabilize the terminal 3-CCA end of the tRNA. Hydroxylation of the C5 position on Lys-34 may allow additional potential stabilizing hydrogen-bond interactions with the P-tRNA.</text>
</comment>
<comment type="similarity">
    <text evidence="1">Belongs to the elongation factor P family.</text>
</comment>
<gene>
    <name evidence="1" type="primary">efp</name>
    <name type="ordered locus">PC1_3765</name>
</gene>
<evidence type="ECO:0000255" key="1">
    <source>
        <dbReference type="HAMAP-Rule" id="MF_00141"/>
    </source>
</evidence>
<dbReference type="EMBL" id="CP001657">
    <property type="protein sequence ID" value="ACT14780.1"/>
    <property type="molecule type" value="Genomic_DNA"/>
</dbReference>
<dbReference type="RefSeq" id="WP_015841891.1">
    <property type="nucleotide sequence ID" value="NC_012917.1"/>
</dbReference>
<dbReference type="SMR" id="C6DFP1"/>
<dbReference type="STRING" id="561230.PC1_3765"/>
<dbReference type="GeneID" id="67792344"/>
<dbReference type="KEGG" id="pct:PC1_3765"/>
<dbReference type="eggNOG" id="COG0231">
    <property type="taxonomic scope" value="Bacteria"/>
</dbReference>
<dbReference type="HOGENOM" id="CLU_074944_0_0_6"/>
<dbReference type="OrthoDB" id="9801844at2"/>
<dbReference type="UniPathway" id="UPA00345"/>
<dbReference type="Proteomes" id="UP000002736">
    <property type="component" value="Chromosome"/>
</dbReference>
<dbReference type="GO" id="GO:0005737">
    <property type="term" value="C:cytoplasm"/>
    <property type="evidence" value="ECO:0007669"/>
    <property type="project" value="UniProtKB-SubCell"/>
</dbReference>
<dbReference type="GO" id="GO:0003746">
    <property type="term" value="F:translation elongation factor activity"/>
    <property type="evidence" value="ECO:0007669"/>
    <property type="project" value="UniProtKB-UniRule"/>
</dbReference>
<dbReference type="GO" id="GO:0043043">
    <property type="term" value="P:peptide biosynthetic process"/>
    <property type="evidence" value="ECO:0007669"/>
    <property type="project" value="InterPro"/>
</dbReference>
<dbReference type="CDD" id="cd04470">
    <property type="entry name" value="S1_EF-P_repeat_1"/>
    <property type="match status" value="1"/>
</dbReference>
<dbReference type="CDD" id="cd05794">
    <property type="entry name" value="S1_EF-P_repeat_2"/>
    <property type="match status" value="1"/>
</dbReference>
<dbReference type="FunFam" id="2.30.30.30:FF:000003">
    <property type="entry name" value="Elongation factor P"/>
    <property type="match status" value="1"/>
</dbReference>
<dbReference type="FunFam" id="2.40.50.140:FF:000004">
    <property type="entry name" value="Elongation factor P"/>
    <property type="match status" value="1"/>
</dbReference>
<dbReference type="FunFam" id="2.40.50.140:FF:000009">
    <property type="entry name" value="Elongation factor P"/>
    <property type="match status" value="1"/>
</dbReference>
<dbReference type="Gene3D" id="2.30.30.30">
    <property type="match status" value="1"/>
</dbReference>
<dbReference type="Gene3D" id="2.40.50.140">
    <property type="entry name" value="Nucleic acid-binding proteins"/>
    <property type="match status" value="2"/>
</dbReference>
<dbReference type="HAMAP" id="MF_00141">
    <property type="entry name" value="EF_P"/>
    <property type="match status" value="1"/>
</dbReference>
<dbReference type="InterPro" id="IPR015365">
    <property type="entry name" value="Elong-fact-P_C"/>
</dbReference>
<dbReference type="InterPro" id="IPR012340">
    <property type="entry name" value="NA-bd_OB-fold"/>
</dbReference>
<dbReference type="InterPro" id="IPR014722">
    <property type="entry name" value="Rib_uL2_dom2"/>
</dbReference>
<dbReference type="InterPro" id="IPR020599">
    <property type="entry name" value="Transl_elong_fac_P/YeiP"/>
</dbReference>
<dbReference type="InterPro" id="IPR013185">
    <property type="entry name" value="Transl_elong_KOW-like"/>
</dbReference>
<dbReference type="InterPro" id="IPR001059">
    <property type="entry name" value="Transl_elong_P/YeiP_cen"/>
</dbReference>
<dbReference type="InterPro" id="IPR013852">
    <property type="entry name" value="Transl_elong_P/YeiP_CS"/>
</dbReference>
<dbReference type="InterPro" id="IPR011768">
    <property type="entry name" value="Transl_elongation_fac_P"/>
</dbReference>
<dbReference type="InterPro" id="IPR008991">
    <property type="entry name" value="Translation_prot_SH3-like_sf"/>
</dbReference>
<dbReference type="NCBIfam" id="TIGR00038">
    <property type="entry name" value="efp"/>
    <property type="match status" value="1"/>
</dbReference>
<dbReference type="NCBIfam" id="NF001810">
    <property type="entry name" value="PRK00529.1"/>
    <property type="match status" value="1"/>
</dbReference>
<dbReference type="PANTHER" id="PTHR30053">
    <property type="entry name" value="ELONGATION FACTOR P"/>
    <property type="match status" value="1"/>
</dbReference>
<dbReference type="PANTHER" id="PTHR30053:SF12">
    <property type="entry name" value="ELONGATION FACTOR P (EF-P) FAMILY PROTEIN"/>
    <property type="match status" value="1"/>
</dbReference>
<dbReference type="Pfam" id="PF01132">
    <property type="entry name" value="EFP"/>
    <property type="match status" value="1"/>
</dbReference>
<dbReference type="Pfam" id="PF08207">
    <property type="entry name" value="EFP_N"/>
    <property type="match status" value="1"/>
</dbReference>
<dbReference type="Pfam" id="PF09285">
    <property type="entry name" value="Elong-fact-P_C"/>
    <property type="match status" value="1"/>
</dbReference>
<dbReference type="PIRSF" id="PIRSF005901">
    <property type="entry name" value="EF-P"/>
    <property type="match status" value="1"/>
</dbReference>
<dbReference type="SMART" id="SM01185">
    <property type="entry name" value="EFP"/>
    <property type="match status" value="1"/>
</dbReference>
<dbReference type="SMART" id="SM00841">
    <property type="entry name" value="Elong-fact-P_C"/>
    <property type="match status" value="1"/>
</dbReference>
<dbReference type="SUPFAM" id="SSF50249">
    <property type="entry name" value="Nucleic acid-binding proteins"/>
    <property type="match status" value="2"/>
</dbReference>
<dbReference type="SUPFAM" id="SSF50104">
    <property type="entry name" value="Translation proteins SH3-like domain"/>
    <property type="match status" value="1"/>
</dbReference>
<dbReference type="PROSITE" id="PS01275">
    <property type="entry name" value="EFP"/>
    <property type="match status" value="1"/>
</dbReference>
<protein>
    <recommendedName>
        <fullName evidence="1">Elongation factor P</fullName>
        <shortName evidence="1">EF-P</shortName>
    </recommendedName>
</protein>
<sequence>MATYSSNDFRSGLKIMFEGEPYAIESSEFVKPGKGQAFARVKMRRLLTGSRVEKTFKSTDSAEGADVVDTNMNYLYNDGEFYHFMHPETFEQHQVEEKTVGDSAKWLQDNAECIVTLWDGRAIAVQPPNFIEAEITDTDPGLKGDTAGTGGKPATLSTGAVVKVPLFVQIGEVVRVDTRSGEYVSRVK</sequence>
<feature type="chain" id="PRO_1000203275" description="Elongation factor P">
    <location>
        <begin position="1"/>
        <end position="188"/>
    </location>
</feature>
<feature type="modified residue" description="N6-(3,6-diaminohexanoyl)-5-hydroxylysine" evidence="1">
    <location>
        <position position="34"/>
    </location>
</feature>
<proteinExistence type="inferred from homology"/>
<accession>C6DFP1</accession>
<organism>
    <name type="scientific">Pectobacterium carotovorum subsp. carotovorum (strain PC1)</name>
    <dbReference type="NCBI Taxonomy" id="561230"/>
    <lineage>
        <taxon>Bacteria</taxon>
        <taxon>Pseudomonadati</taxon>
        <taxon>Pseudomonadota</taxon>
        <taxon>Gammaproteobacteria</taxon>
        <taxon>Enterobacterales</taxon>
        <taxon>Pectobacteriaceae</taxon>
        <taxon>Pectobacterium</taxon>
    </lineage>
</organism>
<reference key="1">
    <citation type="submission" date="2009-07" db="EMBL/GenBank/DDBJ databases">
        <title>Complete sequence of Pectobacterium carotovorum subsp. carotovorum PC1.</title>
        <authorList>
            <consortium name="US DOE Joint Genome Institute"/>
            <person name="Lucas S."/>
            <person name="Copeland A."/>
            <person name="Lapidus A."/>
            <person name="Glavina del Rio T."/>
            <person name="Tice H."/>
            <person name="Bruce D."/>
            <person name="Goodwin L."/>
            <person name="Pitluck S."/>
            <person name="Munk A.C."/>
            <person name="Brettin T."/>
            <person name="Detter J.C."/>
            <person name="Han C."/>
            <person name="Tapia R."/>
            <person name="Larimer F."/>
            <person name="Land M."/>
            <person name="Hauser L."/>
            <person name="Kyrpides N."/>
            <person name="Mikhailova N."/>
            <person name="Balakrishnan V."/>
            <person name="Glasner J."/>
            <person name="Perna N.T."/>
        </authorList>
    </citation>
    <scope>NUCLEOTIDE SEQUENCE [LARGE SCALE GENOMIC DNA]</scope>
    <source>
        <strain>PC1</strain>
    </source>
</reference>
<keyword id="KW-0963">Cytoplasm</keyword>
<keyword id="KW-0251">Elongation factor</keyword>
<keyword id="KW-0379">Hydroxylation</keyword>
<keyword id="KW-0648">Protein biosynthesis</keyword>
<name>EFP_PECCP</name>